<feature type="chain" id="PRO_1000096276" description="UPF0114 protein YqhA">
    <location>
        <begin position="1"/>
        <end position="164"/>
    </location>
</feature>
<feature type="transmembrane region" description="Helical" evidence="1">
    <location>
        <begin position="15"/>
        <end position="35"/>
    </location>
</feature>
<feature type="transmembrane region" description="Helical" evidence="1">
    <location>
        <begin position="53"/>
        <end position="73"/>
    </location>
</feature>
<feature type="transmembrane region" description="Helical" evidence="1">
    <location>
        <begin position="136"/>
        <end position="156"/>
    </location>
</feature>
<proteinExistence type="inferred from homology"/>
<comment type="subcellular location">
    <subcellularLocation>
        <location evidence="1">Cell membrane</location>
        <topology evidence="1">Multi-pass membrane protein</topology>
    </subcellularLocation>
</comment>
<comment type="similarity">
    <text evidence="1">Belongs to the UPF0114 family.</text>
</comment>
<organism>
    <name type="scientific">Salmonella gallinarum (strain 287/91 / NCTC 13346)</name>
    <dbReference type="NCBI Taxonomy" id="550538"/>
    <lineage>
        <taxon>Bacteria</taxon>
        <taxon>Pseudomonadati</taxon>
        <taxon>Pseudomonadota</taxon>
        <taxon>Gammaproteobacteria</taxon>
        <taxon>Enterobacterales</taxon>
        <taxon>Enterobacteriaceae</taxon>
        <taxon>Salmonella</taxon>
    </lineage>
</organism>
<reference key="1">
    <citation type="journal article" date="2008" name="Genome Res.">
        <title>Comparative genome analysis of Salmonella enteritidis PT4 and Salmonella gallinarum 287/91 provides insights into evolutionary and host adaptation pathways.</title>
        <authorList>
            <person name="Thomson N.R."/>
            <person name="Clayton D.J."/>
            <person name="Windhorst D."/>
            <person name="Vernikos G."/>
            <person name="Davidson S."/>
            <person name="Churcher C."/>
            <person name="Quail M.A."/>
            <person name="Stevens M."/>
            <person name="Jones M.A."/>
            <person name="Watson M."/>
            <person name="Barron A."/>
            <person name="Layton A."/>
            <person name="Pickard D."/>
            <person name="Kingsley R.A."/>
            <person name="Bignell A."/>
            <person name="Clark L."/>
            <person name="Harris B."/>
            <person name="Ormond D."/>
            <person name="Abdellah Z."/>
            <person name="Brooks K."/>
            <person name="Cherevach I."/>
            <person name="Chillingworth T."/>
            <person name="Woodward J."/>
            <person name="Norberczak H."/>
            <person name="Lord A."/>
            <person name="Arrowsmith C."/>
            <person name="Jagels K."/>
            <person name="Moule S."/>
            <person name="Mungall K."/>
            <person name="Saunders M."/>
            <person name="Whitehead S."/>
            <person name="Chabalgoity J.A."/>
            <person name="Maskell D."/>
            <person name="Humphreys T."/>
            <person name="Roberts M."/>
            <person name="Barrow P.A."/>
            <person name="Dougan G."/>
            <person name="Parkhill J."/>
        </authorList>
    </citation>
    <scope>NUCLEOTIDE SEQUENCE [LARGE SCALE GENOMIC DNA]</scope>
    <source>
        <strain>287/91 / NCTC 13346</strain>
    </source>
</reference>
<evidence type="ECO:0000255" key="1">
    <source>
        <dbReference type="HAMAP-Rule" id="MF_00143"/>
    </source>
</evidence>
<accession>B5REB2</accession>
<protein>
    <recommendedName>
        <fullName evidence="1">UPF0114 protein YqhA</fullName>
    </recommendedName>
</protein>
<name>YQHA_SALG2</name>
<dbReference type="EMBL" id="AM933173">
    <property type="protein sequence ID" value="CAR38851.1"/>
    <property type="molecule type" value="Genomic_DNA"/>
</dbReference>
<dbReference type="RefSeq" id="WP_000439335.1">
    <property type="nucleotide sequence ID" value="NC_011274.1"/>
</dbReference>
<dbReference type="KEGG" id="seg:SG3049"/>
<dbReference type="HOGENOM" id="CLU_097887_1_1_6"/>
<dbReference type="Proteomes" id="UP000008321">
    <property type="component" value="Chromosome"/>
</dbReference>
<dbReference type="GO" id="GO:0005886">
    <property type="term" value="C:plasma membrane"/>
    <property type="evidence" value="ECO:0007669"/>
    <property type="project" value="UniProtKB-SubCell"/>
</dbReference>
<dbReference type="HAMAP" id="MF_00143">
    <property type="entry name" value="UPF0114"/>
    <property type="match status" value="1"/>
</dbReference>
<dbReference type="InterPro" id="IPR005134">
    <property type="entry name" value="UPF0114"/>
</dbReference>
<dbReference type="InterPro" id="IPR020761">
    <property type="entry name" value="UPF0114_bac"/>
</dbReference>
<dbReference type="NCBIfam" id="TIGR00645">
    <property type="entry name" value="HI0507"/>
    <property type="match status" value="1"/>
</dbReference>
<dbReference type="PANTHER" id="PTHR38596">
    <property type="entry name" value="UPF0114 PROTEIN YQHA"/>
    <property type="match status" value="1"/>
</dbReference>
<dbReference type="PANTHER" id="PTHR38596:SF1">
    <property type="entry name" value="UPF0114 PROTEIN YQHA"/>
    <property type="match status" value="1"/>
</dbReference>
<dbReference type="Pfam" id="PF03350">
    <property type="entry name" value="UPF0114"/>
    <property type="match status" value="1"/>
</dbReference>
<keyword id="KW-1003">Cell membrane</keyword>
<keyword id="KW-0472">Membrane</keyword>
<keyword id="KW-0812">Transmembrane</keyword>
<keyword id="KW-1133">Transmembrane helix</keyword>
<gene>
    <name evidence="1" type="primary">yqhA</name>
    <name type="ordered locus">SG3049</name>
</gene>
<sequence>MERFLENVMYASRWLLAPVYFGLSLALIALALKFFQEILHVLPNVFALAEADLILVLLSLVDMTLVGGLLVMVMFSGYENFVSQLDISAGKEKLNWLGKMDATSLKNKVAASIVAISSIHLLRVFMDAKNVPDNKLMWYVIIHLTFVLSAFVMGYLDRLTRHNH</sequence>